<dbReference type="EMBL" id="AM421808">
    <property type="protein sequence ID" value="CAM10490.1"/>
    <property type="molecule type" value="Genomic_DNA"/>
</dbReference>
<dbReference type="RefSeq" id="WP_002220864.1">
    <property type="nucleotide sequence ID" value="NC_008767.1"/>
</dbReference>
<dbReference type="SMR" id="A1KUE7"/>
<dbReference type="KEGG" id="nmc:NMC1257"/>
<dbReference type="HOGENOM" id="CLU_078938_4_1_4"/>
<dbReference type="Proteomes" id="UP000002286">
    <property type="component" value="Chromosome"/>
</dbReference>
<dbReference type="GO" id="GO:1990904">
    <property type="term" value="C:ribonucleoprotein complex"/>
    <property type="evidence" value="ECO:0007669"/>
    <property type="project" value="UniProtKB-KW"/>
</dbReference>
<dbReference type="GO" id="GO:0005840">
    <property type="term" value="C:ribosome"/>
    <property type="evidence" value="ECO:0007669"/>
    <property type="project" value="UniProtKB-KW"/>
</dbReference>
<dbReference type="GO" id="GO:0019843">
    <property type="term" value="F:rRNA binding"/>
    <property type="evidence" value="ECO:0007669"/>
    <property type="project" value="UniProtKB-UniRule"/>
</dbReference>
<dbReference type="GO" id="GO:0003735">
    <property type="term" value="F:structural constituent of ribosome"/>
    <property type="evidence" value="ECO:0007669"/>
    <property type="project" value="InterPro"/>
</dbReference>
<dbReference type="GO" id="GO:0006412">
    <property type="term" value="P:translation"/>
    <property type="evidence" value="ECO:0007669"/>
    <property type="project" value="UniProtKB-UniRule"/>
</dbReference>
<dbReference type="FunFam" id="3.10.430.100:FF:000010">
    <property type="entry name" value="50S ribosomal protein L9"/>
    <property type="match status" value="1"/>
</dbReference>
<dbReference type="Gene3D" id="3.10.430.100">
    <property type="entry name" value="Ribosomal protein L9, C-terminal domain"/>
    <property type="match status" value="1"/>
</dbReference>
<dbReference type="Gene3D" id="3.40.5.10">
    <property type="entry name" value="Ribosomal protein L9, N-terminal domain"/>
    <property type="match status" value="1"/>
</dbReference>
<dbReference type="HAMAP" id="MF_00503">
    <property type="entry name" value="Ribosomal_bL9"/>
    <property type="match status" value="1"/>
</dbReference>
<dbReference type="InterPro" id="IPR000244">
    <property type="entry name" value="Ribosomal_bL9"/>
</dbReference>
<dbReference type="InterPro" id="IPR009027">
    <property type="entry name" value="Ribosomal_bL9/RNase_H1_N"/>
</dbReference>
<dbReference type="InterPro" id="IPR020594">
    <property type="entry name" value="Ribosomal_bL9_bac/chp"/>
</dbReference>
<dbReference type="InterPro" id="IPR020069">
    <property type="entry name" value="Ribosomal_bL9_C"/>
</dbReference>
<dbReference type="InterPro" id="IPR036791">
    <property type="entry name" value="Ribosomal_bL9_C_sf"/>
</dbReference>
<dbReference type="InterPro" id="IPR020070">
    <property type="entry name" value="Ribosomal_bL9_N"/>
</dbReference>
<dbReference type="InterPro" id="IPR036935">
    <property type="entry name" value="Ribosomal_bL9_N_sf"/>
</dbReference>
<dbReference type="NCBIfam" id="TIGR00158">
    <property type="entry name" value="L9"/>
    <property type="match status" value="1"/>
</dbReference>
<dbReference type="PANTHER" id="PTHR21368">
    <property type="entry name" value="50S RIBOSOMAL PROTEIN L9"/>
    <property type="match status" value="1"/>
</dbReference>
<dbReference type="Pfam" id="PF03948">
    <property type="entry name" value="Ribosomal_L9_C"/>
    <property type="match status" value="1"/>
</dbReference>
<dbReference type="Pfam" id="PF01281">
    <property type="entry name" value="Ribosomal_L9_N"/>
    <property type="match status" value="1"/>
</dbReference>
<dbReference type="SUPFAM" id="SSF55658">
    <property type="entry name" value="L9 N-domain-like"/>
    <property type="match status" value="1"/>
</dbReference>
<dbReference type="SUPFAM" id="SSF55653">
    <property type="entry name" value="Ribosomal protein L9 C-domain"/>
    <property type="match status" value="1"/>
</dbReference>
<dbReference type="PROSITE" id="PS00651">
    <property type="entry name" value="RIBOSOMAL_L9"/>
    <property type="match status" value="1"/>
</dbReference>
<gene>
    <name evidence="1" type="primary">rplI</name>
    <name type="ordered locus">NMC1257</name>
</gene>
<reference key="1">
    <citation type="journal article" date="2007" name="PLoS Genet.">
        <title>Meningococcal genetic variation mechanisms viewed through comparative analysis of serogroup C strain FAM18.</title>
        <authorList>
            <person name="Bentley S.D."/>
            <person name="Vernikos G.S."/>
            <person name="Snyder L.A.S."/>
            <person name="Churcher C."/>
            <person name="Arrowsmith C."/>
            <person name="Chillingworth T."/>
            <person name="Cronin A."/>
            <person name="Davis P.H."/>
            <person name="Holroyd N.E."/>
            <person name="Jagels K."/>
            <person name="Maddison M."/>
            <person name="Moule S."/>
            <person name="Rabbinowitsch E."/>
            <person name="Sharp S."/>
            <person name="Unwin L."/>
            <person name="Whitehead S."/>
            <person name="Quail M.A."/>
            <person name="Achtman M."/>
            <person name="Barrell B.G."/>
            <person name="Saunders N.J."/>
            <person name="Parkhill J."/>
        </authorList>
    </citation>
    <scope>NUCLEOTIDE SEQUENCE [LARGE SCALE GENOMIC DNA]</scope>
    <source>
        <strain>ATCC 700532 / DSM 15464 / FAM18</strain>
    </source>
</reference>
<evidence type="ECO:0000255" key="1">
    <source>
        <dbReference type="HAMAP-Rule" id="MF_00503"/>
    </source>
</evidence>
<evidence type="ECO:0000305" key="2"/>
<name>RL9_NEIMF</name>
<feature type="chain" id="PRO_1000014818" description="Large ribosomal subunit protein bL9">
    <location>
        <begin position="1"/>
        <end position="150"/>
    </location>
</feature>
<sequence>MQIILLEKIGGLGNLGDIVTVKNGYARNFLIPAGKAKRATEANMKEFEVRRAELEAKQAEILADARVRQEKLDGQTVTVAQKAGVDGRLFGSVTNADIAAAIVAAGIEAVKANVRLPNGPLKAVGEYEVEVALHTDAVAKITVAVVAATE</sequence>
<accession>A1KUE7</accession>
<protein>
    <recommendedName>
        <fullName evidence="1">Large ribosomal subunit protein bL9</fullName>
    </recommendedName>
    <alternativeName>
        <fullName evidence="2">50S ribosomal protein L9</fullName>
    </alternativeName>
</protein>
<organism>
    <name type="scientific">Neisseria meningitidis serogroup C / serotype 2a (strain ATCC 700532 / DSM 15464 / FAM18)</name>
    <dbReference type="NCBI Taxonomy" id="272831"/>
    <lineage>
        <taxon>Bacteria</taxon>
        <taxon>Pseudomonadati</taxon>
        <taxon>Pseudomonadota</taxon>
        <taxon>Betaproteobacteria</taxon>
        <taxon>Neisseriales</taxon>
        <taxon>Neisseriaceae</taxon>
        <taxon>Neisseria</taxon>
    </lineage>
</organism>
<comment type="function">
    <text evidence="1">Binds to the 23S rRNA.</text>
</comment>
<comment type="similarity">
    <text evidence="1">Belongs to the bacterial ribosomal protein bL9 family.</text>
</comment>
<keyword id="KW-0687">Ribonucleoprotein</keyword>
<keyword id="KW-0689">Ribosomal protein</keyword>
<keyword id="KW-0694">RNA-binding</keyword>
<keyword id="KW-0699">rRNA-binding</keyword>
<proteinExistence type="inferred from homology"/>